<gene>
    <name evidence="1" type="primary">hemC</name>
    <name type="ordered locus">Clos_1327</name>
</gene>
<feature type="chain" id="PRO_1000059092" description="Porphobilinogen deaminase">
    <location>
        <begin position="1"/>
        <end position="296"/>
    </location>
</feature>
<feature type="modified residue" description="S-(dipyrrolylmethanemethyl)cysteine" evidence="1">
    <location>
        <position position="235"/>
    </location>
</feature>
<organism>
    <name type="scientific">Alkaliphilus oremlandii (strain OhILAs)</name>
    <name type="common">Clostridium oremlandii (strain OhILAs)</name>
    <dbReference type="NCBI Taxonomy" id="350688"/>
    <lineage>
        <taxon>Bacteria</taxon>
        <taxon>Bacillati</taxon>
        <taxon>Bacillota</taxon>
        <taxon>Clostridia</taxon>
        <taxon>Peptostreptococcales</taxon>
        <taxon>Natronincolaceae</taxon>
        <taxon>Alkaliphilus</taxon>
    </lineage>
</organism>
<accession>A8MGE4</accession>
<reference key="1">
    <citation type="submission" date="2007-10" db="EMBL/GenBank/DDBJ databases">
        <title>Complete genome of Alkaliphilus oremlandii OhILAs.</title>
        <authorList>
            <person name="Copeland A."/>
            <person name="Lucas S."/>
            <person name="Lapidus A."/>
            <person name="Barry K."/>
            <person name="Detter J.C."/>
            <person name="Glavina del Rio T."/>
            <person name="Hammon N."/>
            <person name="Israni S."/>
            <person name="Dalin E."/>
            <person name="Tice H."/>
            <person name="Pitluck S."/>
            <person name="Chain P."/>
            <person name="Malfatti S."/>
            <person name="Shin M."/>
            <person name="Vergez L."/>
            <person name="Schmutz J."/>
            <person name="Larimer F."/>
            <person name="Land M."/>
            <person name="Hauser L."/>
            <person name="Kyrpides N."/>
            <person name="Mikhailova N."/>
            <person name="Stolz J.F."/>
            <person name="Dawson A."/>
            <person name="Fisher E."/>
            <person name="Crable B."/>
            <person name="Perera E."/>
            <person name="Lisak J."/>
            <person name="Ranganathan M."/>
            <person name="Basu P."/>
            <person name="Richardson P."/>
        </authorList>
    </citation>
    <scope>NUCLEOTIDE SEQUENCE [LARGE SCALE GENOMIC DNA]</scope>
    <source>
        <strain>OhILAs</strain>
    </source>
</reference>
<name>HEM3_ALKOO</name>
<keyword id="KW-0627">Porphyrin biosynthesis</keyword>
<keyword id="KW-1185">Reference proteome</keyword>
<keyword id="KW-0808">Transferase</keyword>
<evidence type="ECO:0000255" key="1">
    <source>
        <dbReference type="HAMAP-Rule" id="MF_00260"/>
    </source>
</evidence>
<comment type="function">
    <text evidence="1">Tetrapolymerization of the monopyrrole PBG into the hydroxymethylbilane pre-uroporphyrinogen in several discrete steps.</text>
</comment>
<comment type="catalytic activity">
    <reaction evidence="1">
        <text>4 porphobilinogen + H2O = hydroxymethylbilane + 4 NH4(+)</text>
        <dbReference type="Rhea" id="RHEA:13185"/>
        <dbReference type="ChEBI" id="CHEBI:15377"/>
        <dbReference type="ChEBI" id="CHEBI:28938"/>
        <dbReference type="ChEBI" id="CHEBI:57845"/>
        <dbReference type="ChEBI" id="CHEBI:58126"/>
        <dbReference type="EC" id="2.5.1.61"/>
    </reaction>
</comment>
<comment type="cofactor">
    <cofactor evidence="1">
        <name>dipyrromethane</name>
        <dbReference type="ChEBI" id="CHEBI:60342"/>
    </cofactor>
    <text evidence="1">Binds 1 dipyrromethane group covalently.</text>
</comment>
<comment type="pathway">
    <text evidence="1">Porphyrin-containing compound metabolism; protoporphyrin-IX biosynthesis; coproporphyrinogen-III from 5-aminolevulinate: step 2/4.</text>
</comment>
<comment type="subunit">
    <text evidence="1">Monomer.</text>
</comment>
<comment type="miscellaneous">
    <text evidence="1">The porphobilinogen subunits are added to the dipyrromethane group.</text>
</comment>
<comment type="similarity">
    <text evidence="1">Belongs to the HMBS family.</text>
</comment>
<protein>
    <recommendedName>
        <fullName evidence="1">Porphobilinogen deaminase</fullName>
        <shortName evidence="1">PBG</shortName>
        <ecNumber evidence="1">2.5.1.61</ecNumber>
    </recommendedName>
    <alternativeName>
        <fullName evidence="1">Hydroxymethylbilane synthase</fullName>
        <shortName evidence="1">HMBS</shortName>
    </alternativeName>
    <alternativeName>
        <fullName evidence="1">Pre-uroporphyrinogen synthase</fullName>
    </alternativeName>
</protein>
<dbReference type="EC" id="2.5.1.61" evidence="1"/>
<dbReference type="EMBL" id="CP000853">
    <property type="protein sequence ID" value="ABW18872.1"/>
    <property type="molecule type" value="Genomic_DNA"/>
</dbReference>
<dbReference type="RefSeq" id="WP_012159184.1">
    <property type="nucleotide sequence ID" value="NC_009922.1"/>
</dbReference>
<dbReference type="SMR" id="A8MGE4"/>
<dbReference type="STRING" id="350688.Clos_1327"/>
<dbReference type="KEGG" id="aoe:Clos_1327"/>
<dbReference type="eggNOG" id="COG0181">
    <property type="taxonomic scope" value="Bacteria"/>
</dbReference>
<dbReference type="HOGENOM" id="CLU_019704_1_0_9"/>
<dbReference type="OrthoDB" id="9810298at2"/>
<dbReference type="UniPathway" id="UPA00251">
    <property type="reaction ID" value="UER00319"/>
</dbReference>
<dbReference type="Proteomes" id="UP000000269">
    <property type="component" value="Chromosome"/>
</dbReference>
<dbReference type="GO" id="GO:0005737">
    <property type="term" value="C:cytoplasm"/>
    <property type="evidence" value="ECO:0007669"/>
    <property type="project" value="TreeGrafter"/>
</dbReference>
<dbReference type="GO" id="GO:0004418">
    <property type="term" value="F:hydroxymethylbilane synthase activity"/>
    <property type="evidence" value="ECO:0007669"/>
    <property type="project" value="UniProtKB-UniRule"/>
</dbReference>
<dbReference type="GO" id="GO:0006782">
    <property type="term" value="P:protoporphyrinogen IX biosynthetic process"/>
    <property type="evidence" value="ECO:0007669"/>
    <property type="project" value="UniProtKB-UniRule"/>
</dbReference>
<dbReference type="CDD" id="cd13647">
    <property type="entry name" value="PBP2_PBGD_2"/>
    <property type="match status" value="1"/>
</dbReference>
<dbReference type="FunFam" id="3.40.190.10:FF:000004">
    <property type="entry name" value="Porphobilinogen deaminase"/>
    <property type="match status" value="1"/>
</dbReference>
<dbReference type="FunFam" id="3.40.190.10:FF:000005">
    <property type="entry name" value="Porphobilinogen deaminase"/>
    <property type="match status" value="1"/>
</dbReference>
<dbReference type="Gene3D" id="3.40.190.10">
    <property type="entry name" value="Periplasmic binding protein-like II"/>
    <property type="match status" value="2"/>
</dbReference>
<dbReference type="Gene3D" id="3.30.160.40">
    <property type="entry name" value="Porphobilinogen deaminase, C-terminal domain"/>
    <property type="match status" value="1"/>
</dbReference>
<dbReference type="HAMAP" id="MF_00260">
    <property type="entry name" value="Porphobil_deam"/>
    <property type="match status" value="1"/>
</dbReference>
<dbReference type="InterPro" id="IPR000860">
    <property type="entry name" value="HemC"/>
</dbReference>
<dbReference type="InterPro" id="IPR022419">
    <property type="entry name" value="Porphobilin_deaminase_cofac_BS"/>
</dbReference>
<dbReference type="InterPro" id="IPR022417">
    <property type="entry name" value="Porphobilin_deaminase_N"/>
</dbReference>
<dbReference type="InterPro" id="IPR022418">
    <property type="entry name" value="Porphobilinogen_deaminase_C"/>
</dbReference>
<dbReference type="InterPro" id="IPR036803">
    <property type="entry name" value="Porphobilinogen_deaminase_C_sf"/>
</dbReference>
<dbReference type="NCBIfam" id="TIGR00212">
    <property type="entry name" value="hemC"/>
    <property type="match status" value="1"/>
</dbReference>
<dbReference type="PANTHER" id="PTHR11557">
    <property type="entry name" value="PORPHOBILINOGEN DEAMINASE"/>
    <property type="match status" value="1"/>
</dbReference>
<dbReference type="PANTHER" id="PTHR11557:SF0">
    <property type="entry name" value="PORPHOBILINOGEN DEAMINASE"/>
    <property type="match status" value="1"/>
</dbReference>
<dbReference type="Pfam" id="PF01379">
    <property type="entry name" value="Porphobil_deam"/>
    <property type="match status" value="1"/>
</dbReference>
<dbReference type="Pfam" id="PF03900">
    <property type="entry name" value="Porphobil_deamC"/>
    <property type="match status" value="1"/>
</dbReference>
<dbReference type="PIRSF" id="PIRSF001438">
    <property type="entry name" value="4pyrrol_synth_OHMeBilane_synth"/>
    <property type="match status" value="1"/>
</dbReference>
<dbReference type="PRINTS" id="PR00151">
    <property type="entry name" value="PORPHBDMNASE"/>
</dbReference>
<dbReference type="SUPFAM" id="SSF53850">
    <property type="entry name" value="Periplasmic binding protein-like II"/>
    <property type="match status" value="1"/>
</dbReference>
<dbReference type="SUPFAM" id="SSF54782">
    <property type="entry name" value="Porphobilinogen deaminase (hydroxymethylbilane synthase), C-terminal domain"/>
    <property type="match status" value="1"/>
</dbReference>
<dbReference type="PROSITE" id="PS00533">
    <property type="entry name" value="PORPHOBILINOGEN_DEAM"/>
    <property type="match status" value="1"/>
</dbReference>
<sequence>MKIRVGSRESKLAVKQSEIVIEAIRKYDPNIEIELVTMKTTGDIKLDQTLDKIGGKGLFIKELDQALYDDRVDITVHSFKDMPMAIDEYLPIVAVSKREDPRDVLVLPKTVKEPDFSKPIGCSSFRRKIQLQEIYPHCSVEPIRGNVLTRLEKLDRGEFSAITLALAGLKRLGLEERISRIFEVTEILPAACQGVIVVQARKGFDVSFLSDFHDKEAWDISMAERSFVRTLNGGCSSPVAAYGEIKDNYLTLTGLYVDSSNSVHKKTITGARKQGEEMGFNLALQMKGEDEVHGKD</sequence>
<proteinExistence type="inferred from homology"/>